<accession>A5IV75</accession>
<organism>
    <name type="scientific">Staphylococcus aureus (strain JH9)</name>
    <dbReference type="NCBI Taxonomy" id="359786"/>
    <lineage>
        <taxon>Bacteria</taxon>
        <taxon>Bacillati</taxon>
        <taxon>Bacillota</taxon>
        <taxon>Bacilli</taxon>
        <taxon>Bacillales</taxon>
        <taxon>Staphylococcaceae</taxon>
        <taxon>Staphylococcus</taxon>
    </lineage>
</organism>
<proteinExistence type="inferred from homology"/>
<keyword id="KW-0143">Chaperone</keyword>
<keyword id="KW-0963">Cytoplasm</keyword>
<keyword id="KW-0996">Nickel insertion</keyword>
<comment type="function">
    <text evidence="1">Required for maturation of urease via the functional incorporation of the urease nickel metallocenter.</text>
</comment>
<comment type="subunit">
    <text evidence="1">UreD, UreF and UreG form a complex that acts as a GTP-hydrolysis-dependent molecular chaperone, activating the urease apoprotein by helping to assemble the nickel containing metallocenter of UreC. The UreE protein probably delivers the nickel.</text>
</comment>
<comment type="subcellular location">
    <subcellularLocation>
        <location evidence="1">Cytoplasm</location>
    </subcellularLocation>
</comment>
<comment type="similarity">
    <text evidence="1">Belongs to the UreD family.</text>
</comment>
<reference key="1">
    <citation type="submission" date="2007-05" db="EMBL/GenBank/DDBJ databases">
        <title>Complete sequence of chromosome of Staphylococcus aureus subsp. aureus JH9.</title>
        <authorList>
            <consortium name="US DOE Joint Genome Institute"/>
            <person name="Copeland A."/>
            <person name="Lucas S."/>
            <person name="Lapidus A."/>
            <person name="Barry K."/>
            <person name="Detter J.C."/>
            <person name="Glavina del Rio T."/>
            <person name="Hammon N."/>
            <person name="Israni S."/>
            <person name="Pitluck S."/>
            <person name="Chain P."/>
            <person name="Malfatti S."/>
            <person name="Shin M."/>
            <person name="Vergez L."/>
            <person name="Schmutz J."/>
            <person name="Larimer F."/>
            <person name="Land M."/>
            <person name="Hauser L."/>
            <person name="Kyrpides N."/>
            <person name="Kim E."/>
            <person name="Tomasz A."/>
            <person name="Richardson P."/>
        </authorList>
    </citation>
    <scope>NUCLEOTIDE SEQUENCE [LARGE SCALE GENOMIC DNA]</scope>
    <source>
        <strain>JH9</strain>
    </source>
</reference>
<name>URED_STAA9</name>
<protein>
    <recommendedName>
        <fullName evidence="1">Urease accessory protein UreD</fullName>
    </recommendedName>
</protein>
<sequence>MDEQQWTGQLDLTVFFDGNRSVSRDIFFEKALKVIRPVYLNQSTIPTFYIVNVGGGYLDGDRYRMNVNVEDNAKVTLTSQGATKIYKTPSNHVEQYQTFNLKDNAYLEYVADPIIAYENAKFYQHNTFNLNNSSSLFYTDILTPGYSKTGEAFKYQYMHLINEIYIEDELVTYDNLLLNPNKQSINEIGYMEHYSHYGSAYFIHEDVNQKLIDSVYETISSYSNTFDCRVAISQLPTHGFAVRIFAYRTQIIEKILGTIQSYIAENIYDRKLDFLRKY</sequence>
<dbReference type="EMBL" id="CP000703">
    <property type="protein sequence ID" value="ABQ50098.1"/>
    <property type="molecule type" value="Genomic_DNA"/>
</dbReference>
<dbReference type="RefSeq" id="WP_000344352.1">
    <property type="nucleotide sequence ID" value="NC_009487.1"/>
</dbReference>
<dbReference type="SMR" id="A5IV75"/>
<dbReference type="KEGG" id="saj:SaurJH9_2318"/>
<dbReference type="HOGENOM" id="CLU_056339_5_0_9"/>
<dbReference type="GO" id="GO:0005737">
    <property type="term" value="C:cytoplasm"/>
    <property type="evidence" value="ECO:0007669"/>
    <property type="project" value="UniProtKB-SubCell"/>
</dbReference>
<dbReference type="GO" id="GO:0016151">
    <property type="term" value="F:nickel cation binding"/>
    <property type="evidence" value="ECO:0007669"/>
    <property type="project" value="UniProtKB-UniRule"/>
</dbReference>
<dbReference type="HAMAP" id="MF_01384">
    <property type="entry name" value="UreD"/>
    <property type="match status" value="1"/>
</dbReference>
<dbReference type="InterPro" id="IPR002669">
    <property type="entry name" value="UreD"/>
</dbReference>
<dbReference type="PANTHER" id="PTHR33643">
    <property type="entry name" value="UREASE ACCESSORY PROTEIN D"/>
    <property type="match status" value="1"/>
</dbReference>
<dbReference type="PANTHER" id="PTHR33643:SF1">
    <property type="entry name" value="UREASE ACCESSORY PROTEIN D"/>
    <property type="match status" value="1"/>
</dbReference>
<dbReference type="Pfam" id="PF01774">
    <property type="entry name" value="UreD"/>
    <property type="match status" value="1"/>
</dbReference>
<evidence type="ECO:0000255" key="1">
    <source>
        <dbReference type="HAMAP-Rule" id="MF_01384"/>
    </source>
</evidence>
<feature type="chain" id="PRO_0000346597" description="Urease accessory protein UreD">
    <location>
        <begin position="1"/>
        <end position="278"/>
    </location>
</feature>
<gene>
    <name evidence="1" type="primary">ureD</name>
    <name type="ordered locus">SaurJH9_2318</name>
</gene>